<proteinExistence type="evidence at protein level"/>
<sequence>MTENSDKVPIALVGPDDVEFCSPPAYAAVTVKPSSPARLLKVGAVVLISGAVLLLLGAIGAFYFWKGSDNHIYNVHYTMSINGKLQDGSMEIDAGNNLETFKMGSGAEEAVEVNDFQNGITGIRFAGGEKCYIKAQVKARIPEVGTMTKQSISSELEGKIMPVKYEENSLIWVAGDQPVKDNSFLSSKVLELCGDLPIFWLKPTYPKEIQRERRELVRKIVTTTTTRRLRSGPQGTPAPGRPNNGTRPSVQEDAEPFNPDNPYHQQEGESMTFDPRLDHEGICCIECRRSYTHCQKICEPLGGYHPWPYNYQGCRSACRVIMPCSWWVARILGMV</sequence>
<reference key="1">
    <citation type="journal article" date="1991" name="Biochem. Biophys. Res. Commun.">
        <title>Molecular cloning of a new class of cartilage-specific matrix, chondromodulin-I, which stimulates growth of cultured chondrocytes.</title>
        <authorList>
            <person name="Hiraki Y."/>
            <person name="Tanaka H."/>
            <person name="Inoue H."/>
            <person name="Kondo J."/>
            <person name="Kamizono A."/>
            <person name="Suzuki F."/>
        </authorList>
    </citation>
    <scope>NUCLEOTIDE SEQUENCE [MRNA]</scope>
    <scope>PROTEIN SEQUENCE OF 215-241 AND 297-317</scope>
    <scope>SUBCELLULAR LOCATION</scope>
    <scope>DISULFIDE BONDS</scope>
    <source>
        <tissue>Fetal epiphyseal cartilage</tissue>
    </source>
</reference>
<reference key="2">
    <citation type="journal article" date="1990" name="J. Biol. Chem.">
        <title>An 18-kDa glycoprotein from bovine nasal cartilage. Isolation and primary structure of small, cartilage-derived glycoprotein.</title>
        <authorList>
            <person name="Neame P.J."/>
            <person name="Treep J.T."/>
            <person name="Young C.N."/>
        </authorList>
    </citation>
    <scope>PROTEIN SEQUENCE OF 215-335</scope>
    <scope>VARIANTS MET-221 AND 223-THR-THR-224 DELINS ASN-GLU</scope>
    <scope>GLYCOSYLATION AT ASN-223 (VARIANT 223-ASN-GLU-224)</scope>
    <scope>GLYCOSYLATION AT THR-236 AND ASN-244</scope>
    <source>
        <tissue>Nasal cartilage</tissue>
    </source>
</reference>
<reference key="3">
    <citation type="journal article" date="1990" name="J. Biol. Chem.">
        <authorList>
            <person name="Neame P.J."/>
            <person name="Treep J.T."/>
            <person name="Young C.N."/>
        </authorList>
    </citation>
    <scope>ERRATUM OF PUBMED:2351661</scope>
</reference>
<reference key="4">
    <citation type="journal article" date="2001" name="J. Biol. Chem.">
        <title>Post-translational processing of bovine chondromodulin-I.</title>
        <authorList>
            <person name="Azizan A."/>
            <person name="Holaday N."/>
            <person name="Neame P.J."/>
        </authorList>
    </citation>
    <scope>PROTEOLYTIC PROCESSING</scope>
</reference>
<reference key="5">
    <citation type="journal article" date="2000" name="Pediatr. Nephrol.">
        <title>Chondromodulin-I as a novel cartilage-specific growth-modulating factor.</title>
        <authorList>
            <person name="Hiraki Y."/>
            <person name="Shukunami C."/>
        </authorList>
    </citation>
    <scope>REVIEW</scope>
</reference>
<gene>
    <name evidence="2" type="primary">CNMD</name>
    <name evidence="2" type="synonym">CHMI</name>
    <name evidence="2" type="synonym">LECT1</name>
</gene>
<name>CNMD_BOVIN</name>
<evidence type="ECO:0000250" key="1"/>
<evidence type="ECO:0000250" key="2">
    <source>
        <dbReference type="UniProtKB" id="O75829"/>
    </source>
</evidence>
<evidence type="ECO:0000255" key="3"/>
<evidence type="ECO:0000255" key="4">
    <source>
        <dbReference type="PROSITE-ProRule" id="PRU00255"/>
    </source>
</evidence>
<evidence type="ECO:0000256" key="5">
    <source>
        <dbReference type="SAM" id="MobiDB-lite"/>
    </source>
</evidence>
<evidence type="ECO:0000269" key="6">
    <source>
    </source>
</evidence>
<evidence type="ECO:0000269" key="7">
    <source>
    </source>
</evidence>
<evidence type="ECO:0000269" key="8">
    <source>
    </source>
</evidence>
<evidence type="ECO:0000305" key="9"/>
<keyword id="KW-0891">Chondrogenesis</keyword>
<keyword id="KW-0165">Cleavage on pair of basic residues</keyword>
<keyword id="KW-0217">Developmental protein</keyword>
<keyword id="KW-0221">Differentiation</keyword>
<keyword id="KW-0903">Direct protein sequencing</keyword>
<keyword id="KW-1015">Disulfide bond</keyword>
<keyword id="KW-0272">Extracellular matrix</keyword>
<keyword id="KW-0325">Glycoprotein</keyword>
<keyword id="KW-0472">Membrane</keyword>
<keyword id="KW-1185">Reference proteome</keyword>
<keyword id="KW-0964">Secreted</keyword>
<keyword id="KW-0812">Transmembrane</keyword>
<keyword id="KW-1133">Transmembrane helix</keyword>
<dbReference type="EMBL" id="M65081">
    <property type="protein sequence ID" value="AAA30445.1"/>
    <property type="molecule type" value="mRNA"/>
</dbReference>
<dbReference type="PIR" id="JT0569">
    <property type="entry name" value="JT0569"/>
</dbReference>
<dbReference type="RefSeq" id="NP_776694.1">
    <property type="nucleotide sequence ID" value="NM_174269.2"/>
</dbReference>
<dbReference type="SMR" id="P17404"/>
<dbReference type="FunCoup" id="P17404">
    <property type="interactions" value="30"/>
</dbReference>
<dbReference type="STRING" id="9913.ENSBTAP00000035726"/>
<dbReference type="GlyCosmos" id="P17404">
    <property type="glycosylation" value="3 sites, No reported glycans"/>
</dbReference>
<dbReference type="GlyGen" id="P17404">
    <property type="glycosylation" value="2 sites"/>
</dbReference>
<dbReference type="iPTMnet" id="P17404"/>
<dbReference type="PaxDb" id="9913-ENSBTAP00000035726"/>
<dbReference type="GeneID" id="281683"/>
<dbReference type="KEGG" id="bta:281683"/>
<dbReference type="CTD" id="11061"/>
<dbReference type="VEuPathDB" id="HostDB:ENSBTAG00000025502"/>
<dbReference type="eggNOG" id="ENOG502QVPC">
    <property type="taxonomic scope" value="Eukaryota"/>
</dbReference>
<dbReference type="HOGENOM" id="CLU_071852_0_0_1"/>
<dbReference type="InParanoid" id="P17404"/>
<dbReference type="OMA" id="GNLPIFW"/>
<dbReference type="OrthoDB" id="5985282at2759"/>
<dbReference type="TreeFam" id="TF329712"/>
<dbReference type="Proteomes" id="UP000009136">
    <property type="component" value="Chromosome 12"/>
</dbReference>
<dbReference type="Bgee" id="ENSBTAG00000025502">
    <property type="expression patterns" value="Expressed in laryngeal cartilage and 85 other cell types or tissues"/>
</dbReference>
<dbReference type="GO" id="GO:0012505">
    <property type="term" value="C:endomembrane system"/>
    <property type="evidence" value="ECO:0007669"/>
    <property type="project" value="UniProtKB-SubCell"/>
</dbReference>
<dbReference type="GO" id="GO:0005576">
    <property type="term" value="C:extracellular region"/>
    <property type="evidence" value="ECO:0007669"/>
    <property type="project" value="UniProtKB-KW"/>
</dbReference>
<dbReference type="GO" id="GO:0016020">
    <property type="term" value="C:membrane"/>
    <property type="evidence" value="ECO:0007669"/>
    <property type="project" value="UniProtKB-KW"/>
</dbReference>
<dbReference type="GO" id="GO:0051216">
    <property type="term" value="P:cartilage development"/>
    <property type="evidence" value="ECO:0007669"/>
    <property type="project" value="UniProtKB-KW"/>
</dbReference>
<dbReference type="GO" id="GO:0030154">
    <property type="term" value="P:cell differentiation"/>
    <property type="evidence" value="ECO:0007669"/>
    <property type="project" value="UniProtKB-KW"/>
</dbReference>
<dbReference type="GO" id="GO:0016525">
    <property type="term" value="P:negative regulation of angiogenesis"/>
    <property type="evidence" value="ECO:0000318"/>
    <property type="project" value="GO_Central"/>
</dbReference>
<dbReference type="GO" id="GO:0001937">
    <property type="term" value="P:negative regulation of endothelial cell proliferation"/>
    <property type="evidence" value="ECO:0000318"/>
    <property type="project" value="GO_Central"/>
</dbReference>
<dbReference type="FunFam" id="3.30.390.150:FF:000001">
    <property type="entry name" value="leukocyte cell-derived chemotaxin 1"/>
    <property type="match status" value="1"/>
</dbReference>
<dbReference type="Gene3D" id="3.30.390.150">
    <property type="match status" value="1"/>
</dbReference>
<dbReference type="InterPro" id="IPR007084">
    <property type="entry name" value="BRICHOS_dom"/>
</dbReference>
<dbReference type="InterPro" id="IPR043405">
    <property type="entry name" value="Chondromodulin/Tenomodulin"/>
</dbReference>
<dbReference type="PANTHER" id="PTHR14064">
    <property type="entry name" value="CHONDROMODULIN-RELATED"/>
    <property type="match status" value="1"/>
</dbReference>
<dbReference type="PANTHER" id="PTHR14064:SF6">
    <property type="entry name" value="LEUKOCYTE CELL-DERIVED CHEMOTAXIN 1"/>
    <property type="match status" value="1"/>
</dbReference>
<dbReference type="Pfam" id="PF04089">
    <property type="entry name" value="BRICHOS"/>
    <property type="match status" value="1"/>
</dbReference>
<dbReference type="SMART" id="SM01039">
    <property type="entry name" value="BRICHOS"/>
    <property type="match status" value="1"/>
</dbReference>
<dbReference type="PROSITE" id="PS50869">
    <property type="entry name" value="BRICHOS"/>
    <property type="match status" value="1"/>
</dbReference>
<accession>P17404</accession>
<accession>P23590</accession>
<feature type="chain" id="PRO_0000005343" description="Chondrosurfactant protein" evidence="3">
    <location>
        <begin position="1"/>
        <end position="210"/>
    </location>
</feature>
<feature type="propeptide" id="PRO_0000005344" evidence="3">
    <location>
        <begin position="211"/>
        <end position="214"/>
    </location>
</feature>
<feature type="chain" id="PRO_0000005345" description="Chondromodulin-1">
    <location>
        <begin position="215"/>
        <end position="335"/>
    </location>
</feature>
<feature type="transmembrane region" description="Helical" evidence="3">
    <location>
        <begin position="45"/>
        <end position="65"/>
    </location>
</feature>
<feature type="domain" description="BRICHOS" evidence="4">
    <location>
        <begin position="104"/>
        <end position="201"/>
    </location>
</feature>
<feature type="region of interest" description="Disordered" evidence="5">
    <location>
        <begin position="221"/>
        <end position="269"/>
    </location>
</feature>
<feature type="glycosylation site" description="N-linked (GlcNAc...) asparagine; in variant 223-N-E-224" evidence="8">
    <location>
        <position position="223"/>
    </location>
</feature>
<feature type="glycosylation site" description="O-linked (GalNAc...) threonine; partial" evidence="8">
    <location>
        <position position="236"/>
    </location>
</feature>
<feature type="glycosylation site" description="N-linked (GlcNAc...) asparagine" evidence="8">
    <location>
        <position position="244"/>
    </location>
</feature>
<feature type="disulfide bond" evidence="1">
    <location>
        <begin position="131"/>
        <end position="193"/>
    </location>
</feature>
<feature type="disulfide bond" evidence="7">
    <location>
        <begin position="283"/>
        <end position="287"/>
    </location>
</feature>
<feature type="disulfide bond" evidence="7">
    <location>
        <begin position="284"/>
        <end position="324"/>
    </location>
</feature>
<feature type="disulfide bond" evidence="7">
    <location>
        <begin position="294"/>
        <end position="318"/>
    </location>
</feature>
<feature type="disulfide bond" evidence="7">
    <location>
        <begin position="298"/>
        <end position="314"/>
    </location>
</feature>
<feature type="sequence variant" evidence="8">
    <original>V</original>
    <variation>M</variation>
    <location>
        <position position="221"/>
    </location>
</feature>
<feature type="sequence variant" evidence="8">
    <original>TT</original>
    <variation>NE</variation>
    <location>
        <begin position="223"/>
        <end position="224"/>
    </location>
</feature>
<feature type="sequence conflict" description="In Ref. 2; AA sequence." evidence="9" ref="2">
    <original>P</original>
    <variation>PD</variation>
    <location>
        <position position="256"/>
    </location>
</feature>
<comment type="function">
    <text evidence="1">Bifunctional growth regulator that stimulates the growth of cultured chondrocytes in the presence of basic fibroblast growth factor (FGF) but inhibits the growth of cultured vascular endothelial cells. May contribute to the rapid growth of cartilage and vascular invasion prior to the replacement of cartilage by bone during endochondral bone development. Inhibits in vitro tube formation and mobilization of endothelial cells. Plays a role as antiangiogenic factor in cardiac valves to suppress neovascularization (By similarity).</text>
</comment>
<comment type="subcellular location">
    <molecule>Chondromodulin-1</molecule>
    <subcellularLocation>
        <location>Secreted</location>
        <location>Extracellular space</location>
        <location>Extracellular matrix</location>
    </subcellularLocation>
    <text>Accumulated in the inter-territorial matrix of cartilage.</text>
</comment>
<comment type="subcellular location">
    <molecule>Chondrosurfactant protein</molecule>
    <subcellularLocation>
        <location evidence="9">Endomembrane system</location>
        <topology evidence="9">Single-pass membrane protein</topology>
    </subcellularLocation>
</comment>
<comment type="tissue specificity">
    <text>Nasal and articular cartilage, and fetal epiphysis.</text>
</comment>
<comment type="PTM">
    <text evidence="6">After cleavage, the post-translationally modified ChM-I is secreted as a glycoprotein.</text>
</comment>
<comment type="PTM">
    <text evidence="6">Two other smaller nonglycosylated chondromodulin forms (9 kDa and 7 kDa) are found either in developing articular cartilage or in chondrocytes. The 9 kDa form could be processed by an extracellular matrix-associated protease as a metalloproteinase and the 7 kDa form could be processed intracellularly.</text>
</comment>
<comment type="similarity">
    <text evidence="9">Belongs to the chondromodulin-1 family.</text>
</comment>
<organism>
    <name type="scientific">Bos taurus</name>
    <name type="common">Bovine</name>
    <dbReference type="NCBI Taxonomy" id="9913"/>
    <lineage>
        <taxon>Eukaryota</taxon>
        <taxon>Metazoa</taxon>
        <taxon>Chordata</taxon>
        <taxon>Craniata</taxon>
        <taxon>Vertebrata</taxon>
        <taxon>Euteleostomi</taxon>
        <taxon>Mammalia</taxon>
        <taxon>Eutheria</taxon>
        <taxon>Laurasiatheria</taxon>
        <taxon>Artiodactyla</taxon>
        <taxon>Ruminantia</taxon>
        <taxon>Pecora</taxon>
        <taxon>Bovidae</taxon>
        <taxon>Bovinae</taxon>
        <taxon>Bos</taxon>
    </lineage>
</organism>
<protein>
    <recommendedName>
        <fullName evidence="9">Leukocyte cell-derived chemotaxin 1</fullName>
    </recommendedName>
    <alternativeName>
        <fullName evidence="2">Chondromodulin</fullName>
    </alternativeName>
    <alternativeName>
        <fullName>Small cartilage-derived glycoprotein</fullName>
        <shortName>SCGP</shortName>
    </alternativeName>
    <component>
        <recommendedName>
            <fullName>Chondrosurfactant protein</fullName>
            <shortName>CH-SP</shortName>
        </recommendedName>
    </component>
    <component>
        <recommendedName>
            <fullName>Chondromodulin-1</fullName>
        </recommendedName>
        <alternativeName>
            <fullName>Chondromodulin-I</fullName>
            <shortName>ChM-I</shortName>
        </alternativeName>
    </component>
</protein>